<comment type="similarity">
    <text evidence="1">Belongs to the CinA family.</text>
</comment>
<feature type="chain" id="PRO_1000100329" description="CinA-like protein">
    <location>
        <begin position="1"/>
        <end position="425"/>
    </location>
</feature>
<accession>B2HDA1</accession>
<protein>
    <recommendedName>
        <fullName evidence="1">CinA-like protein</fullName>
    </recommendedName>
</protein>
<proteinExistence type="inferred from homology"/>
<sequence>MAVSARAGIVVTGTEVLTGRVQDRNGPWIADQLLELGVELAHITICGDRPADIEAQLRFMADQDLDLIITSGGLGPTADDMTVEVVARFCGRELILDAELEDTIANILKRLMARNPGFDPGNFDSVRAANQKQAMIPAGAQVINPVGTAPGLVVPGKPAVMVLPGPPRELQPMWHSAIQMPGAQEAIAGRTTYRQETIRMFGLPESGLAETLRSAETTIPDFGALEITTCLRRGEIEMVTRYEPGAADTYAQVARLLRDRHGDQIYSEDGSQVDDLVARLLADRRIATAESCTAGLLAARLTDRPGSSGYVMGGVVSYSNEAKAELLGVDPALIEMHGAVSEPVAQAMAAGALQRFGADTAVAITGIAGPGGGTEQKPVGTVCFCVLVGDGRNVTRTLRLPGNRSDIRERSTTVAMHLLRRALSE</sequence>
<evidence type="ECO:0000255" key="1">
    <source>
        <dbReference type="HAMAP-Rule" id="MF_00226"/>
    </source>
</evidence>
<name>CINAL_MYCMM</name>
<dbReference type="EMBL" id="CP000854">
    <property type="protein sequence ID" value="ACC41238.1"/>
    <property type="molecule type" value="Genomic_DNA"/>
</dbReference>
<dbReference type="RefSeq" id="WP_012394501.1">
    <property type="nucleotide sequence ID" value="NC_010612.1"/>
</dbReference>
<dbReference type="SMR" id="B2HDA1"/>
<dbReference type="STRING" id="216594.MMAR_2796"/>
<dbReference type="KEGG" id="mmi:MMAR_2796"/>
<dbReference type="eggNOG" id="COG1058">
    <property type="taxonomic scope" value="Bacteria"/>
</dbReference>
<dbReference type="eggNOG" id="COG1546">
    <property type="taxonomic scope" value="Bacteria"/>
</dbReference>
<dbReference type="HOGENOM" id="CLU_030805_9_2_11"/>
<dbReference type="OrthoDB" id="1253990at2"/>
<dbReference type="Proteomes" id="UP000001190">
    <property type="component" value="Chromosome"/>
</dbReference>
<dbReference type="CDD" id="cd00885">
    <property type="entry name" value="cinA"/>
    <property type="match status" value="1"/>
</dbReference>
<dbReference type="Gene3D" id="3.90.950.20">
    <property type="entry name" value="CinA-like"/>
    <property type="match status" value="1"/>
</dbReference>
<dbReference type="Gene3D" id="3.40.980.10">
    <property type="entry name" value="MoaB/Mog-like domain"/>
    <property type="match status" value="1"/>
</dbReference>
<dbReference type="HAMAP" id="MF_00226_B">
    <property type="entry name" value="CinA_B"/>
    <property type="match status" value="1"/>
</dbReference>
<dbReference type="InterPro" id="IPR050101">
    <property type="entry name" value="CinA"/>
</dbReference>
<dbReference type="InterPro" id="IPR036653">
    <property type="entry name" value="CinA-like_C"/>
</dbReference>
<dbReference type="InterPro" id="IPR008136">
    <property type="entry name" value="CinA_C"/>
</dbReference>
<dbReference type="InterPro" id="IPR008135">
    <property type="entry name" value="Competence-induced_CinA"/>
</dbReference>
<dbReference type="InterPro" id="IPR036425">
    <property type="entry name" value="MoaB/Mog-like_dom_sf"/>
</dbReference>
<dbReference type="InterPro" id="IPR001453">
    <property type="entry name" value="MoaB/Mog_dom"/>
</dbReference>
<dbReference type="NCBIfam" id="TIGR00200">
    <property type="entry name" value="cinA_nterm"/>
    <property type="match status" value="1"/>
</dbReference>
<dbReference type="NCBIfam" id="TIGR00199">
    <property type="entry name" value="PncC_domain"/>
    <property type="match status" value="1"/>
</dbReference>
<dbReference type="NCBIfam" id="NF001813">
    <property type="entry name" value="PRK00549.1"/>
    <property type="match status" value="1"/>
</dbReference>
<dbReference type="PANTHER" id="PTHR13939">
    <property type="entry name" value="NICOTINAMIDE-NUCLEOTIDE AMIDOHYDROLASE PNCC"/>
    <property type="match status" value="1"/>
</dbReference>
<dbReference type="PANTHER" id="PTHR13939:SF0">
    <property type="entry name" value="NMN AMIDOHYDROLASE-LIKE PROTEIN YFAY"/>
    <property type="match status" value="1"/>
</dbReference>
<dbReference type="Pfam" id="PF02464">
    <property type="entry name" value="CinA"/>
    <property type="match status" value="1"/>
</dbReference>
<dbReference type="Pfam" id="PF00994">
    <property type="entry name" value="MoCF_biosynth"/>
    <property type="match status" value="1"/>
</dbReference>
<dbReference type="PIRSF" id="PIRSF006728">
    <property type="entry name" value="CinA"/>
    <property type="match status" value="1"/>
</dbReference>
<dbReference type="SMART" id="SM00852">
    <property type="entry name" value="MoCF_biosynth"/>
    <property type="match status" value="1"/>
</dbReference>
<dbReference type="SUPFAM" id="SSF142433">
    <property type="entry name" value="CinA-like"/>
    <property type="match status" value="1"/>
</dbReference>
<dbReference type="SUPFAM" id="SSF53218">
    <property type="entry name" value="Molybdenum cofactor biosynthesis proteins"/>
    <property type="match status" value="1"/>
</dbReference>
<organism>
    <name type="scientific">Mycobacterium marinum (strain ATCC BAA-535 / M)</name>
    <dbReference type="NCBI Taxonomy" id="216594"/>
    <lineage>
        <taxon>Bacteria</taxon>
        <taxon>Bacillati</taxon>
        <taxon>Actinomycetota</taxon>
        <taxon>Actinomycetes</taxon>
        <taxon>Mycobacteriales</taxon>
        <taxon>Mycobacteriaceae</taxon>
        <taxon>Mycobacterium</taxon>
        <taxon>Mycobacterium ulcerans group</taxon>
    </lineage>
</organism>
<gene>
    <name type="ordered locus">MMAR_2796</name>
</gene>
<reference key="1">
    <citation type="journal article" date="2008" name="Genome Res.">
        <title>Insights from the complete genome sequence of Mycobacterium marinum on the evolution of Mycobacterium tuberculosis.</title>
        <authorList>
            <person name="Stinear T.P."/>
            <person name="Seemann T."/>
            <person name="Harrison P.F."/>
            <person name="Jenkin G.A."/>
            <person name="Davies J.K."/>
            <person name="Johnson P.D."/>
            <person name="Abdellah Z."/>
            <person name="Arrowsmith C."/>
            <person name="Chillingworth T."/>
            <person name="Churcher C."/>
            <person name="Clarke K."/>
            <person name="Cronin A."/>
            <person name="Davis P."/>
            <person name="Goodhead I."/>
            <person name="Holroyd N."/>
            <person name="Jagels K."/>
            <person name="Lord A."/>
            <person name="Moule S."/>
            <person name="Mungall K."/>
            <person name="Norbertczak H."/>
            <person name="Quail M.A."/>
            <person name="Rabbinowitsch E."/>
            <person name="Walker D."/>
            <person name="White B."/>
            <person name="Whitehead S."/>
            <person name="Small P.L."/>
            <person name="Brosch R."/>
            <person name="Ramakrishnan L."/>
            <person name="Fischbach M.A."/>
            <person name="Parkhill J."/>
            <person name="Cole S.T."/>
        </authorList>
    </citation>
    <scope>NUCLEOTIDE SEQUENCE [LARGE SCALE GENOMIC DNA]</scope>
    <source>
        <strain>ATCC BAA-535 / M</strain>
    </source>
</reference>
<keyword id="KW-1185">Reference proteome</keyword>